<gene>
    <name evidence="8" type="primary">Rab3gap2</name>
</gene>
<reference key="1">
    <citation type="journal article" date="2004" name="Nature">
        <title>Genome sequence of the Brown Norway rat yields insights into mammalian evolution.</title>
        <authorList>
            <person name="Gibbs R.A."/>
            <person name="Weinstock G.M."/>
            <person name="Metzker M.L."/>
            <person name="Muzny D.M."/>
            <person name="Sodergren E.J."/>
            <person name="Scherer S."/>
            <person name="Scott G."/>
            <person name="Steffen D."/>
            <person name="Worley K.C."/>
            <person name="Burch P.E."/>
            <person name="Okwuonu G."/>
            <person name="Hines S."/>
            <person name="Lewis L."/>
            <person name="Deramo C."/>
            <person name="Delgado O."/>
            <person name="Dugan-Rocha S."/>
            <person name="Miner G."/>
            <person name="Morgan M."/>
            <person name="Hawes A."/>
            <person name="Gill R."/>
            <person name="Holt R.A."/>
            <person name="Adams M.D."/>
            <person name="Amanatides P.G."/>
            <person name="Baden-Tillson H."/>
            <person name="Barnstead M."/>
            <person name="Chin S."/>
            <person name="Evans C.A."/>
            <person name="Ferriera S."/>
            <person name="Fosler C."/>
            <person name="Glodek A."/>
            <person name="Gu Z."/>
            <person name="Jennings D."/>
            <person name="Kraft C.L."/>
            <person name="Nguyen T."/>
            <person name="Pfannkoch C.M."/>
            <person name="Sitter C."/>
            <person name="Sutton G.G."/>
            <person name="Venter J.C."/>
            <person name="Woodage T."/>
            <person name="Smith D."/>
            <person name="Lee H.-M."/>
            <person name="Gustafson E."/>
            <person name="Cahill P."/>
            <person name="Kana A."/>
            <person name="Doucette-Stamm L."/>
            <person name="Weinstock K."/>
            <person name="Fechtel K."/>
            <person name="Weiss R.B."/>
            <person name="Dunn D.M."/>
            <person name="Green E.D."/>
            <person name="Blakesley R.W."/>
            <person name="Bouffard G.G."/>
            <person name="De Jong P.J."/>
            <person name="Osoegawa K."/>
            <person name="Zhu B."/>
            <person name="Marra M."/>
            <person name="Schein J."/>
            <person name="Bosdet I."/>
            <person name="Fjell C."/>
            <person name="Jones S."/>
            <person name="Krzywinski M."/>
            <person name="Mathewson C."/>
            <person name="Siddiqui A."/>
            <person name="Wye N."/>
            <person name="McPherson J."/>
            <person name="Zhao S."/>
            <person name="Fraser C.M."/>
            <person name="Shetty J."/>
            <person name="Shatsman S."/>
            <person name="Geer K."/>
            <person name="Chen Y."/>
            <person name="Abramzon S."/>
            <person name="Nierman W.C."/>
            <person name="Havlak P.H."/>
            <person name="Chen R."/>
            <person name="Durbin K.J."/>
            <person name="Egan A."/>
            <person name="Ren Y."/>
            <person name="Song X.-Z."/>
            <person name="Li B."/>
            <person name="Liu Y."/>
            <person name="Qin X."/>
            <person name="Cawley S."/>
            <person name="Cooney A.J."/>
            <person name="D'Souza L.M."/>
            <person name="Martin K."/>
            <person name="Wu J.Q."/>
            <person name="Gonzalez-Garay M.L."/>
            <person name="Jackson A.R."/>
            <person name="Kalafus K.J."/>
            <person name="McLeod M.P."/>
            <person name="Milosavljevic A."/>
            <person name="Virk D."/>
            <person name="Volkov A."/>
            <person name="Wheeler D.A."/>
            <person name="Zhang Z."/>
            <person name="Bailey J.A."/>
            <person name="Eichler E.E."/>
            <person name="Tuzun E."/>
            <person name="Birney E."/>
            <person name="Mongin E."/>
            <person name="Ureta-Vidal A."/>
            <person name="Woodwark C."/>
            <person name="Zdobnov E."/>
            <person name="Bork P."/>
            <person name="Suyama M."/>
            <person name="Torrents D."/>
            <person name="Alexandersson M."/>
            <person name="Trask B.J."/>
            <person name="Young J.M."/>
            <person name="Huang H."/>
            <person name="Wang H."/>
            <person name="Xing H."/>
            <person name="Daniels S."/>
            <person name="Gietzen D."/>
            <person name="Schmidt J."/>
            <person name="Stevens K."/>
            <person name="Vitt U."/>
            <person name="Wingrove J."/>
            <person name="Camara F."/>
            <person name="Mar Alba M."/>
            <person name="Abril J.F."/>
            <person name="Guigo R."/>
            <person name="Smit A."/>
            <person name="Dubchak I."/>
            <person name="Rubin E.M."/>
            <person name="Couronne O."/>
            <person name="Poliakov A."/>
            <person name="Huebner N."/>
            <person name="Ganten D."/>
            <person name="Goesele C."/>
            <person name="Hummel O."/>
            <person name="Kreitler T."/>
            <person name="Lee Y.-A."/>
            <person name="Monti J."/>
            <person name="Schulz H."/>
            <person name="Zimdahl H."/>
            <person name="Himmelbauer H."/>
            <person name="Lehrach H."/>
            <person name="Jacob H.J."/>
            <person name="Bromberg S."/>
            <person name="Gullings-Handley J."/>
            <person name="Jensen-Seaman M.I."/>
            <person name="Kwitek A.E."/>
            <person name="Lazar J."/>
            <person name="Pasko D."/>
            <person name="Tonellato P.J."/>
            <person name="Twigger S."/>
            <person name="Ponting C.P."/>
            <person name="Duarte J.M."/>
            <person name="Rice S."/>
            <person name="Goodstadt L."/>
            <person name="Beatson S.A."/>
            <person name="Emes R.D."/>
            <person name="Winter E.E."/>
            <person name="Webber C."/>
            <person name="Brandt P."/>
            <person name="Nyakatura G."/>
            <person name="Adetobi M."/>
            <person name="Chiaromonte F."/>
            <person name="Elnitski L."/>
            <person name="Eswara P."/>
            <person name="Hardison R.C."/>
            <person name="Hou M."/>
            <person name="Kolbe D."/>
            <person name="Makova K."/>
            <person name="Miller W."/>
            <person name="Nekrutenko A."/>
            <person name="Riemer C."/>
            <person name="Schwartz S."/>
            <person name="Taylor J."/>
            <person name="Yang S."/>
            <person name="Zhang Y."/>
            <person name="Lindpaintner K."/>
            <person name="Andrews T.D."/>
            <person name="Caccamo M."/>
            <person name="Clamp M."/>
            <person name="Clarke L."/>
            <person name="Curwen V."/>
            <person name="Durbin R.M."/>
            <person name="Eyras E."/>
            <person name="Searle S.M."/>
            <person name="Cooper G.M."/>
            <person name="Batzoglou S."/>
            <person name="Brudno M."/>
            <person name="Sidow A."/>
            <person name="Stone E.A."/>
            <person name="Payseur B.A."/>
            <person name="Bourque G."/>
            <person name="Lopez-Otin C."/>
            <person name="Puente X.S."/>
            <person name="Chakrabarti K."/>
            <person name="Chatterji S."/>
            <person name="Dewey C."/>
            <person name="Pachter L."/>
            <person name="Bray N."/>
            <person name="Yap V.B."/>
            <person name="Caspi A."/>
            <person name="Tesler G."/>
            <person name="Pevzner P.A."/>
            <person name="Haussler D."/>
            <person name="Roskin K.M."/>
            <person name="Baertsch R."/>
            <person name="Clawson H."/>
            <person name="Furey T.S."/>
            <person name="Hinrichs A.S."/>
            <person name="Karolchik D."/>
            <person name="Kent W.J."/>
            <person name="Rosenbloom K.R."/>
            <person name="Trumbower H."/>
            <person name="Weirauch M."/>
            <person name="Cooper D.N."/>
            <person name="Stenson P.D."/>
            <person name="Ma B."/>
            <person name="Brent M."/>
            <person name="Arumugam M."/>
            <person name="Shteynberg D."/>
            <person name="Copley R.R."/>
            <person name="Taylor M.S."/>
            <person name="Riethman H."/>
            <person name="Mudunuri U."/>
            <person name="Peterson J."/>
            <person name="Guyer M."/>
            <person name="Felsenfeld A."/>
            <person name="Old S."/>
            <person name="Mockrin S."/>
            <person name="Collins F.S."/>
        </authorList>
    </citation>
    <scope>NUCLEOTIDE SEQUENCE [LARGE SCALE GENOMIC DNA]</scope>
    <source>
        <strain>Brown Norway</strain>
    </source>
</reference>
<reference key="2">
    <citation type="journal article" date="1998" name="J. Biol. Chem.">
        <title>Molecular cloning and characterization of the noncatalytic subunit of the Rab3 subfamily-specific GTPase-activating protein.</title>
        <authorList>
            <person name="Nagano F."/>
            <person name="Sasaki T."/>
            <person name="Fukui K."/>
            <person name="Asakura T."/>
            <person name="Imazumi K."/>
            <person name="Takai Y."/>
        </authorList>
    </citation>
    <scope>PROTEIN SEQUENCE OF 41-54; 532-544 AND 1218-1229</scope>
    <scope>SUBCELLULAR LOCATION</scope>
    <scope>INTERACTION WITH RAB3GAP2</scope>
    <source>
        <tissue>Brain</tissue>
    </source>
</reference>
<reference key="3">
    <citation type="journal article" date="2004" name="Genome Res.">
        <title>The status, quality, and expansion of the NIH full-length cDNA project: the Mammalian Gene Collection (MGC).</title>
        <authorList>
            <consortium name="The MGC Project Team"/>
        </authorList>
    </citation>
    <scope>NUCLEOTIDE SEQUENCE [LARGE SCALE MRNA] OF 1053-1386</scope>
    <source>
        <tissue>Ovary</tissue>
    </source>
</reference>
<reference key="4">
    <citation type="journal article" date="2002" name="J. Biol. Chem.">
        <title>Rabconnectin-3, a novel protein that binds both GDP/GTP exchange protein and GTPase-activating protein for Rab3 small G protein family.</title>
        <authorList>
            <person name="Nagano F."/>
            <person name="Kawabe H."/>
            <person name="Nakanishi H."/>
            <person name="Shinohara M."/>
            <person name="Deguchi-Tawarada M."/>
            <person name="Takeuchi M."/>
            <person name="Sasaki T."/>
            <person name="Takai Y."/>
        </authorList>
    </citation>
    <scope>INTERACTION WITH DMXL2</scope>
</reference>
<reference key="5">
    <citation type="journal article" date="2012" name="Nat. Commun.">
        <title>Quantitative maps of protein phosphorylation sites across 14 different rat organs and tissues.</title>
        <authorList>
            <person name="Lundby A."/>
            <person name="Secher A."/>
            <person name="Lage K."/>
            <person name="Nordsborg N.B."/>
            <person name="Dmytriyev A."/>
            <person name="Lundby C."/>
            <person name="Olsen J.V."/>
        </authorList>
    </citation>
    <scope>PHOSPHORYLATION [LARGE SCALE ANALYSIS] AT SER-448 AND SER-976</scope>
    <scope>IDENTIFICATION BY MASS SPECTROMETRY [LARGE SCALE ANALYSIS]</scope>
</reference>
<evidence type="ECO:0000250" key="1">
    <source>
        <dbReference type="UniProtKB" id="Q15042"/>
    </source>
</evidence>
<evidence type="ECO:0000250" key="2">
    <source>
        <dbReference type="UniProtKB" id="Q8BMG7"/>
    </source>
</evidence>
<evidence type="ECO:0000250" key="3">
    <source>
        <dbReference type="UniProtKB" id="Q9H2M9"/>
    </source>
</evidence>
<evidence type="ECO:0000256" key="4">
    <source>
        <dbReference type="SAM" id="MobiDB-lite"/>
    </source>
</evidence>
<evidence type="ECO:0000269" key="5">
    <source>
    </source>
</evidence>
<evidence type="ECO:0000269" key="6">
    <source>
    </source>
</evidence>
<evidence type="ECO:0000305" key="7"/>
<evidence type="ECO:0000312" key="8">
    <source>
        <dbReference type="RGD" id="1311518"/>
    </source>
</evidence>
<evidence type="ECO:0007744" key="9">
    <source>
    </source>
</evidence>
<feature type="chain" id="PRO_0000191664" description="Rab3 GTPase-activating protein non-catalytic subunit">
    <location>
        <begin position="1"/>
        <end position="1386"/>
    </location>
</feature>
<feature type="region of interest" description="Disordered" evidence="4">
    <location>
        <begin position="31"/>
        <end position="69"/>
    </location>
</feature>
<feature type="region of interest" description="Disordered" evidence="4">
    <location>
        <begin position="959"/>
        <end position="982"/>
    </location>
</feature>
<feature type="compositionally biased region" description="Acidic residues" evidence="4">
    <location>
        <begin position="43"/>
        <end position="63"/>
    </location>
</feature>
<feature type="compositionally biased region" description="Basic and acidic residues" evidence="4">
    <location>
        <begin position="959"/>
        <end position="973"/>
    </location>
</feature>
<feature type="modified residue" description="Phosphoserine" evidence="2">
    <location>
        <position position="38"/>
    </location>
</feature>
<feature type="modified residue" description="Phosphoserine" evidence="9">
    <location>
        <position position="448"/>
    </location>
</feature>
<feature type="modified residue" description="Phosphothreonine" evidence="3">
    <location>
        <position position="899"/>
    </location>
</feature>
<feature type="modified residue" description="Phosphoserine" evidence="3">
    <location>
        <position position="914"/>
    </location>
</feature>
<feature type="modified residue" description="Phosphoserine" evidence="9">
    <location>
        <position position="976"/>
    </location>
</feature>
<feature type="sequence conflict" description="In Ref. 3; AAH86380." evidence="7" ref="3">
    <original>K</original>
    <variation>R</variation>
    <location>
        <position position="1231"/>
    </location>
</feature>
<organism>
    <name type="scientific">Rattus norvegicus</name>
    <name type="common">Rat</name>
    <dbReference type="NCBI Taxonomy" id="10116"/>
    <lineage>
        <taxon>Eukaryota</taxon>
        <taxon>Metazoa</taxon>
        <taxon>Chordata</taxon>
        <taxon>Craniata</taxon>
        <taxon>Vertebrata</taxon>
        <taxon>Euteleostomi</taxon>
        <taxon>Mammalia</taxon>
        <taxon>Eutheria</taxon>
        <taxon>Euarchontoglires</taxon>
        <taxon>Glires</taxon>
        <taxon>Rodentia</taxon>
        <taxon>Myomorpha</taxon>
        <taxon>Muroidea</taxon>
        <taxon>Muridae</taxon>
        <taxon>Murinae</taxon>
        <taxon>Rattus</taxon>
    </lineage>
</organism>
<keyword id="KW-0963">Cytoplasm</keyword>
<keyword id="KW-0903">Direct protein sequencing</keyword>
<keyword id="KW-0256">Endoplasmic reticulum</keyword>
<keyword id="KW-0343">GTPase activation</keyword>
<keyword id="KW-0597">Phosphoprotein</keyword>
<keyword id="KW-1185">Reference proteome</keyword>
<name>RBGPR_RAT</name>
<dbReference type="EMBL" id="AABR03085350">
    <property type="status" value="NOT_ANNOTATED_CDS"/>
    <property type="molecule type" value="Genomic_DNA"/>
</dbReference>
<dbReference type="EMBL" id="AABR03089585">
    <property type="status" value="NOT_ANNOTATED_CDS"/>
    <property type="molecule type" value="Genomic_DNA"/>
</dbReference>
<dbReference type="EMBL" id="AABR03089113">
    <property type="status" value="NOT_ANNOTATED_CDS"/>
    <property type="molecule type" value="Genomic_DNA"/>
</dbReference>
<dbReference type="EMBL" id="AABR03089836">
    <property type="status" value="NOT_ANNOTATED_CDS"/>
    <property type="molecule type" value="Genomic_DNA"/>
</dbReference>
<dbReference type="EMBL" id="AABR03089287">
    <property type="status" value="NOT_ANNOTATED_CDS"/>
    <property type="molecule type" value="Genomic_DNA"/>
</dbReference>
<dbReference type="EMBL" id="AABR03086829">
    <property type="status" value="NOT_ANNOTATED_CDS"/>
    <property type="molecule type" value="Genomic_DNA"/>
</dbReference>
<dbReference type="EMBL" id="AABR03087362">
    <property type="status" value="NOT_ANNOTATED_CDS"/>
    <property type="molecule type" value="Genomic_DNA"/>
</dbReference>
<dbReference type="EMBL" id="BC086380">
    <property type="protein sequence ID" value="AAH86380.1"/>
    <property type="status" value="ALT_FRAME"/>
    <property type="molecule type" value="mRNA"/>
</dbReference>
<dbReference type="RefSeq" id="NP_001035244.2">
    <property type="nucleotide sequence ID" value="NM_001040154.2"/>
</dbReference>
<dbReference type="SMR" id="Q5U1Z0"/>
<dbReference type="BioGRID" id="252892">
    <property type="interactions" value="2"/>
</dbReference>
<dbReference type="FunCoup" id="Q5U1Z0">
    <property type="interactions" value="4124"/>
</dbReference>
<dbReference type="IntAct" id="Q5U1Z0">
    <property type="interactions" value="1"/>
</dbReference>
<dbReference type="STRING" id="10116.ENSRNOP00000038422"/>
<dbReference type="iPTMnet" id="Q5U1Z0"/>
<dbReference type="PhosphoSitePlus" id="Q5U1Z0"/>
<dbReference type="jPOST" id="Q5U1Z0"/>
<dbReference type="PaxDb" id="10116-ENSRNOP00000003216"/>
<dbReference type="PeptideAtlas" id="Q5U1Z0"/>
<dbReference type="GeneID" id="289350"/>
<dbReference type="KEGG" id="rno:289350"/>
<dbReference type="AGR" id="RGD:1311518"/>
<dbReference type="CTD" id="25782"/>
<dbReference type="RGD" id="1311518">
    <property type="gene designation" value="Rab3gap2"/>
</dbReference>
<dbReference type="eggNOG" id="KOG2727">
    <property type="taxonomic scope" value="Eukaryota"/>
</dbReference>
<dbReference type="InParanoid" id="Q5U1Z0"/>
<dbReference type="OrthoDB" id="6498300at2759"/>
<dbReference type="PhylomeDB" id="Q5U1Z0"/>
<dbReference type="Reactome" id="R-RNO-6811436">
    <property type="pathway name" value="COPI-independent Golgi-to-ER retrograde traffic"/>
</dbReference>
<dbReference type="Reactome" id="R-RNO-8876198">
    <property type="pathway name" value="RAB GEFs exchange GTP for GDP on RABs"/>
</dbReference>
<dbReference type="PRO" id="PR:Q5U1Z0"/>
<dbReference type="Proteomes" id="UP000002494">
    <property type="component" value="Unplaced"/>
</dbReference>
<dbReference type="GO" id="GO:0005776">
    <property type="term" value="C:autophagosome"/>
    <property type="evidence" value="ECO:0000318"/>
    <property type="project" value="GO_Central"/>
</dbReference>
<dbReference type="GO" id="GO:0005737">
    <property type="term" value="C:cytoplasm"/>
    <property type="evidence" value="ECO:0000250"/>
    <property type="project" value="UniProtKB"/>
</dbReference>
<dbReference type="GO" id="GO:0005783">
    <property type="term" value="C:endoplasmic reticulum"/>
    <property type="evidence" value="ECO:0007669"/>
    <property type="project" value="UniProtKB-SubCell"/>
</dbReference>
<dbReference type="GO" id="GO:0005886">
    <property type="term" value="C:plasma membrane"/>
    <property type="evidence" value="ECO:0000250"/>
    <property type="project" value="UniProtKB"/>
</dbReference>
<dbReference type="GO" id="GO:0042734">
    <property type="term" value="C:presynaptic membrane"/>
    <property type="evidence" value="ECO:0000318"/>
    <property type="project" value="GO_Central"/>
</dbReference>
<dbReference type="GO" id="GO:0032991">
    <property type="term" value="C:protein-containing complex"/>
    <property type="evidence" value="ECO:0000266"/>
    <property type="project" value="RGD"/>
</dbReference>
<dbReference type="GO" id="GO:0030234">
    <property type="term" value="F:enzyme regulator activity"/>
    <property type="evidence" value="ECO:0000314"/>
    <property type="project" value="UniProtKB"/>
</dbReference>
<dbReference type="GO" id="GO:0005096">
    <property type="term" value="F:GTPase activator activity"/>
    <property type="evidence" value="ECO:0007669"/>
    <property type="project" value="UniProtKB-KW"/>
</dbReference>
<dbReference type="GO" id="GO:0031267">
    <property type="term" value="F:small GTPase binding"/>
    <property type="evidence" value="ECO:0000266"/>
    <property type="project" value="RGD"/>
</dbReference>
<dbReference type="GO" id="GO:0097051">
    <property type="term" value="P:establishment of protein localization to endoplasmic reticulum membrane"/>
    <property type="evidence" value="ECO:0000266"/>
    <property type="project" value="RGD"/>
</dbReference>
<dbReference type="GO" id="GO:0016236">
    <property type="term" value="P:macroautophagy"/>
    <property type="evidence" value="ECO:0000318"/>
    <property type="project" value="GO_Central"/>
</dbReference>
<dbReference type="GO" id="GO:2000786">
    <property type="term" value="P:positive regulation of autophagosome assembly"/>
    <property type="evidence" value="ECO:0000250"/>
    <property type="project" value="GO_Central"/>
</dbReference>
<dbReference type="GO" id="GO:1903373">
    <property type="term" value="P:positive regulation of endoplasmic reticulum tubular network organization"/>
    <property type="evidence" value="ECO:0000266"/>
    <property type="project" value="RGD"/>
</dbReference>
<dbReference type="GO" id="GO:1903061">
    <property type="term" value="P:positive regulation of protein lipidation"/>
    <property type="evidence" value="ECO:0000250"/>
    <property type="project" value="GO_Central"/>
</dbReference>
<dbReference type="GO" id="GO:0043087">
    <property type="term" value="P:regulation of GTPase activity"/>
    <property type="evidence" value="ECO:0000314"/>
    <property type="project" value="UniProtKB"/>
</dbReference>
<dbReference type="GO" id="GO:0099536">
    <property type="term" value="P:synaptic signaling"/>
    <property type="evidence" value="ECO:0000318"/>
    <property type="project" value="GO_Central"/>
</dbReference>
<dbReference type="InterPro" id="IPR026059">
    <property type="entry name" value="Rab3GAP2"/>
</dbReference>
<dbReference type="InterPro" id="IPR029257">
    <property type="entry name" value="RAB3GAP2_C"/>
</dbReference>
<dbReference type="InterPro" id="IPR032839">
    <property type="entry name" value="RAB3GAP_N"/>
</dbReference>
<dbReference type="PANTHER" id="PTHR12472:SF0">
    <property type="entry name" value="RAB3 GTPASE-ACTIVATING PROTEIN NON-CATALYTIC SUBUNIT"/>
    <property type="match status" value="1"/>
</dbReference>
<dbReference type="PANTHER" id="PTHR12472">
    <property type="entry name" value="RAB3-GAP REGULATORY DOMAIN"/>
    <property type="match status" value="1"/>
</dbReference>
<dbReference type="Pfam" id="PF14656">
    <property type="entry name" value="RAB3GAP2_C"/>
    <property type="match status" value="1"/>
</dbReference>
<dbReference type="Pfam" id="PF14655">
    <property type="entry name" value="RAB3GAP2_N"/>
    <property type="match status" value="1"/>
</dbReference>
<comment type="function">
    <text evidence="1 3">Regulatory subunit of the Rab3 GTPase-activating (Rab3GAP) complex composed of RAB3GAP1 and RAB3GAP2, which has GTPase-activating protein (GAP) activity towards various Rab3 subfamily members (RAB3A, RAB3B, RAB3C and RAB3D), RAB5A and RAB43, and guanine nucleotide exchange factor (GEF) activity towards RAB18 (By similarity). As part of the Rab3GAP complex, acts as a GAP for Rab3 proteins by converting active RAB3-GTP to the inactive form RAB3-GDP (By similarity). Rab3 proteins are involved in regulated exocytosis of neurotransmitters and hormones (By similarity). The Rab3GAP complex acts as a GEF for RAB18 by promoting the conversion of inactive RAB18-GDP to the active form RAB18-GTP (By similarity). Recruits and stabilizes RAB18 at the cis-Golgi membrane in fibroblasts where RAB18 is most likely activated (By similarity). Also involved in RAB18 recruitment at the endoplasmic reticulum (ER) membrane where it maintains proper ER structure (By similarity). Required for normal eye and brain development (By similarity). May participate in neurodevelopmental processes such as proliferation, migration and differentiation before synapse formation, and non-synaptic vesicular release of neurotransmitters (By similarity).</text>
</comment>
<comment type="subunit">
    <text evidence="3 5 6">The Rab3 GTPase-activating complex is a heterodimer composed of Rab3gap1 and Rab3gap2 (PubMed:9733780). The Rab3 GTPase-activating complex interacts with DMXL2 (PubMed:11809763). Interacts with LMAN1 (By similarity).</text>
</comment>
<comment type="subcellular location">
    <subcellularLocation>
        <location evidence="6">Cytoplasm</location>
    </subcellularLocation>
    <subcellularLocation>
        <location evidence="3">Endoplasmic reticulum</location>
    </subcellularLocation>
    <text evidence="6">In neurons, it is enriched in the synaptic soluble fraction.</text>
</comment>
<comment type="similarity">
    <text evidence="7">Belongs to the Rab3-GAP regulatory subunit family.</text>
</comment>
<comment type="sequence caution" evidence="7">
    <conflict type="frameshift">
        <sequence resource="EMBL-CDS" id="AAH86380"/>
    </conflict>
</comment>
<protein>
    <recommendedName>
        <fullName>Rab3 GTPase-activating protein non-catalytic subunit</fullName>
    </recommendedName>
    <alternativeName>
        <fullName>Rab3 GTPase-activating protein 150 kDa subunit</fullName>
    </alternativeName>
    <alternativeName>
        <fullName>Rab3-GAP p150</fullName>
        <shortName>Rab3-GAP150</shortName>
    </alternativeName>
    <alternativeName>
        <fullName>Rab3-GAP regulatory subunit</fullName>
    </alternativeName>
</protein>
<proteinExistence type="evidence at protein level"/>
<accession>Q5U1Z0</accession>
<sequence length="1386" mass="154431">MACSIVQFCSFQDLQSARDFLFPQLREETPGALRRDPSKTSNWEDDSWGAWEETEPQEPEEEGNTSKTQKHSWLQECVLSLSPTSDLMVIAREQKAAFLVRKWKHSDKGKEEMQFAVGWSGSVSAEEGEYVTSALCIPLASQKRSSTGRPDWTCIVVGFTSGYVRFYTEGVLLLAQLLNEDRVLQLKCRTYEIPRHPGVTEQNEELSILYPAAIVTIDGFSLFQSLRACRNQVAKAAASGNENIQPPPLAYKKWGLQDIDTIIDHASIGIMTLSPFDQMKTASNIGGFNAAIKNSPPAMSQYITVGSSPFTGFFYALEGSTQPLLSHVALAVASKLTSALFSAASGWLGWKSKHEEETVQKQKPKMEPATPLAVRFGLPDSRRHGESICLSPCNTLAAVTDDFGRVILLDVARGIAIRMWKGYRDAQIGWIQIVEDLHERVPEKGDFSPFGNTQGPSRVAQFLVIYAPRRGILEVWSTQQGPRVGAFNVGKHCRLLYPGYKIMGLNNVTSQSWQPQTYQICLVDPVSASVKAVNVPFHLALSDKKSERAKDLHLVKKLAALLRAKSPRPDSFEAEIKELILDIKYPATKKQALESILASDRVSFSCLRNVTQTSMDTLKNQELESVDEGLLQFCASKLKLLHLYESVSQLNTLDFHSDTPFSDNDLAVLLRLDDKELLKLRALLEKYKQENTKATVRFSEDADGVLPVKTFLEYLDYEKDALSIRKTSEEECVALGSFFFWKCLHGESSTEDMCHTLESAGLSPQQLLSLLLSVWLSKEKDILDKPQSVCCLHTMLSLLSKMKVAIDETWDSQSVSPWWQQMRMACIQSENNGAALLSAHVGHSVAAQMSSSATDKKFSQMVLDADAEALTDSWEALSLDTEYWKLLLRQLEDCLILQTLLHSRASPPAAKASSPQTEPLPRLSVKKLLEGGKGGIADSVAKWIFKQDLSPELLKCANREKDVENPDEPREGIARSPPEVSEVETDLGAVPDLLRLAYEQFPCSLELDVLHAHCCWEYVVQWNKDPEEARFLVRSIEHLRHILNPHVQNGISLMMWNTFLVKRFSAATYLMDKVGKSPKDRLCRRDVGMSDTALTSFLGSCLDLLQTSLEADISRDEVQVPVLDTEDAWLSVEGPTSIVELALEQKPIHYPLVEHHSILCSILYAAMSFSLKSVKPLALFDSKGKNAFFKDLTSIQLLPSGEMDPNFISVRQQFLLKVVSAAVQAQHSKDKDPSARAADTHGQDLNWTALAVDLAHHLQVSEDVIRRHYVGELYSYGADLLGEEAILQVQDKEVLASQLLVLTGQRLAHALFHTQTKEGMELLARLPPTLCTWLKAMNPQDLQNTGVPVAATAKLVHKVMELLPEKHGQYSLALHLIEAVEAMATL</sequence>